<name>PEX26_CRIGR</name>
<organism>
    <name type="scientific">Cricetulus griseus</name>
    <name type="common">Chinese hamster</name>
    <name type="synonym">Cricetulus barabensis griseus</name>
    <dbReference type="NCBI Taxonomy" id="10029"/>
    <lineage>
        <taxon>Eukaryota</taxon>
        <taxon>Metazoa</taxon>
        <taxon>Chordata</taxon>
        <taxon>Craniata</taxon>
        <taxon>Vertebrata</taxon>
        <taxon>Euteleostomi</taxon>
        <taxon>Mammalia</taxon>
        <taxon>Eutheria</taxon>
        <taxon>Euarchontoglires</taxon>
        <taxon>Glires</taxon>
        <taxon>Rodentia</taxon>
        <taxon>Myomorpha</taxon>
        <taxon>Muroidea</taxon>
        <taxon>Cricetidae</taxon>
        <taxon>Cricetinae</taxon>
        <taxon>Cricetulus</taxon>
    </lineage>
</organism>
<reference key="1">
    <citation type="journal article" date="2011" name="Nat. Biotechnol.">
        <title>The genomic sequence of the Chinese hamster ovary (CHO)-K1 cell line.</title>
        <authorList>
            <person name="Xu X."/>
            <person name="Nagarajan H."/>
            <person name="Lewis N.E."/>
            <person name="Pan S."/>
            <person name="Cai Z."/>
            <person name="Liu X."/>
            <person name="Chen W."/>
            <person name="Xie M."/>
            <person name="Wang W."/>
            <person name="Hammond S."/>
            <person name="Andersen M.R."/>
            <person name="Neff N."/>
            <person name="Passarelli B."/>
            <person name="Koh W."/>
            <person name="Fan H.C."/>
            <person name="Wang J."/>
            <person name="Gui Y."/>
            <person name="Lee K.H."/>
            <person name="Betenbaugh M.J."/>
            <person name="Quake S.R."/>
            <person name="Famili I."/>
            <person name="Palsson B.O."/>
            <person name="Wang J."/>
        </authorList>
    </citation>
    <scope>NUCLEOTIDE SEQUENCE [LARGE SCALE GENOMIC DNA]</scope>
</reference>
<reference key="2">
    <citation type="journal article" date="1999" name="Exp. Cell Res.">
        <title>Newly identified Chinese hamster ovary cell mutants defective in peroxisome assembly represent complementation group A of human peroxisome biogenesis disorders and one novel group in mammals.</title>
        <authorList>
            <person name="Ghaedi K."/>
            <person name="Itagaki A."/>
            <person name="Toyama R."/>
            <person name="Tamura S."/>
            <person name="Matsumura T."/>
            <person name="Kawai A."/>
            <person name="Shimozawa N."/>
            <person name="Suzuki Y."/>
            <person name="Kondo N."/>
            <person name="Fujiki Y."/>
        </authorList>
    </citation>
    <scope>IDENTIFICATION</scope>
</reference>
<reference key="3">
    <citation type="journal article" date="2006" name="J. Biol. Chem.">
        <title>Dynamic and functional assembly of the AAA peroxins, Pex1p and Pex6p, and their membrane receptor Pex26p.</title>
        <authorList>
            <person name="Tamura S."/>
            <person name="Yasutake S."/>
            <person name="Matsumoto N."/>
            <person name="Fujiki Y."/>
        </authorList>
    </citation>
    <scope>FUNCTION</scope>
</reference>
<reference key="4">
    <citation type="journal article" date="2011" name="Traffic">
        <title>Recruiting mechanism of the AAA peroxins, Pex1p and Pex6p, to Pex26p on the peroxisomal membrane.</title>
        <authorList>
            <person name="Nashiro C."/>
            <person name="Kashiwagi A."/>
            <person name="Matsuzaki T."/>
            <person name="Tamura S."/>
            <person name="Fujiki Y."/>
        </authorList>
    </citation>
    <scope>FUNCTION</scope>
</reference>
<dbReference type="EMBL" id="JH000601">
    <property type="protein sequence ID" value="EGW04921.1"/>
    <property type="molecule type" value="Genomic_DNA"/>
</dbReference>
<dbReference type="RefSeq" id="XP_003505767.1">
    <property type="nucleotide sequence ID" value="XM_003505719.5"/>
</dbReference>
<dbReference type="SMR" id="G3HQ82"/>
<dbReference type="FunCoup" id="G3HQ82">
    <property type="interactions" value="647"/>
</dbReference>
<dbReference type="STRING" id="10029.G3HQ82"/>
<dbReference type="PaxDb" id="10029-XP_007627993.1"/>
<dbReference type="Ensembl" id="ENSCGRT00001000575.1">
    <property type="protein sequence ID" value="ENSCGRP00001000550.1"/>
    <property type="gene ID" value="ENSCGRG00001000447.1"/>
</dbReference>
<dbReference type="GeneID" id="100753828"/>
<dbReference type="CTD" id="55670"/>
<dbReference type="eggNOG" id="ENOG502RXMN">
    <property type="taxonomic scope" value="Eukaryota"/>
</dbReference>
<dbReference type="GeneTree" id="ENSGT00510000049725"/>
<dbReference type="InParanoid" id="G3HQ82"/>
<dbReference type="OMA" id="QTCERAW"/>
<dbReference type="OrthoDB" id="5954192at2759"/>
<dbReference type="Proteomes" id="UP000001075">
    <property type="component" value="Unassembled WGS sequence"/>
</dbReference>
<dbReference type="Proteomes" id="UP000694386">
    <property type="component" value="Unplaced"/>
</dbReference>
<dbReference type="Proteomes" id="UP001108280">
    <property type="component" value="Unplaced"/>
</dbReference>
<dbReference type="GO" id="GO:0005778">
    <property type="term" value="C:peroxisomal membrane"/>
    <property type="evidence" value="ECO:0000250"/>
    <property type="project" value="UniProtKB"/>
</dbReference>
<dbReference type="GO" id="GO:0051117">
    <property type="term" value="F:ATPase binding"/>
    <property type="evidence" value="ECO:0007669"/>
    <property type="project" value="TreeGrafter"/>
</dbReference>
<dbReference type="GO" id="GO:0044877">
    <property type="term" value="F:protein-containing complex binding"/>
    <property type="evidence" value="ECO:0007669"/>
    <property type="project" value="InterPro"/>
</dbReference>
<dbReference type="GO" id="GO:0043495">
    <property type="term" value="F:protein-membrane adaptor activity"/>
    <property type="evidence" value="ECO:0000250"/>
    <property type="project" value="UniProtKB"/>
</dbReference>
<dbReference type="GO" id="GO:0016558">
    <property type="term" value="P:protein import into peroxisome matrix"/>
    <property type="evidence" value="ECO:0000315"/>
    <property type="project" value="UniProtKB"/>
</dbReference>
<dbReference type="GO" id="GO:0045046">
    <property type="term" value="P:protein import into peroxisome membrane"/>
    <property type="evidence" value="ECO:0007669"/>
    <property type="project" value="InterPro"/>
</dbReference>
<dbReference type="GO" id="GO:0022615">
    <property type="term" value="P:protein to membrane docking"/>
    <property type="evidence" value="ECO:0000250"/>
    <property type="project" value="UniProtKB"/>
</dbReference>
<dbReference type="InterPro" id="IPR010797">
    <property type="entry name" value="Pex26"/>
</dbReference>
<dbReference type="PANTHER" id="PTHR16262">
    <property type="entry name" value="PEROXISOME ASSEMBLY PROTEIN 26"/>
    <property type="match status" value="1"/>
</dbReference>
<dbReference type="PANTHER" id="PTHR16262:SF2">
    <property type="entry name" value="PEROXISOME ASSEMBLY PROTEIN 26"/>
    <property type="match status" value="1"/>
</dbReference>
<dbReference type="Pfam" id="PF07163">
    <property type="entry name" value="Pex26"/>
    <property type="match status" value="1"/>
</dbReference>
<gene>
    <name type="primary">Pex26</name>
</gene>
<keyword id="KW-0472">Membrane</keyword>
<keyword id="KW-0576">Peroxisome</keyword>
<keyword id="KW-0653">Protein transport</keyword>
<keyword id="KW-1185">Reference proteome</keyword>
<keyword id="KW-0735">Signal-anchor</keyword>
<keyword id="KW-0812">Transmembrane</keyword>
<keyword id="KW-1133">Transmembrane helix</keyword>
<keyword id="KW-0813">Transport</keyword>
<accession>G3HQ82</accession>
<proteinExistence type="inferred from homology"/>
<sequence>MKNDSSTSAAPMKGLVGPLRSSEPARALPAVPPAVYLLEEAADLLVVHLDFHAALETCERAWQSLAEEPTSGTVVEVKCSLCVVGIQALAEMNRWREVLSWVLQYYQVPEKLPPKVLELCILLYSKMREPRAVLAMADAWLQDPDNQGLPEYGSLAELHLLRVLLPLGRLSEAEGLAVGSAAFSEEQREAVLQAICTARQQHTREHLSSQEQQQMSQEGSFSHKLMSLLRLLRRLWDAAASHLLSQPFKKSLLAALILCLLVLRFDPATPSSLPFLYQLAHLFRRIQKATLSRLYPLALRD</sequence>
<protein>
    <recommendedName>
        <fullName evidence="5">Peroxisome assembly protein 26</fullName>
    </recommendedName>
    <alternativeName>
        <fullName evidence="5">Peroxin-26</fullName>
    </alternativeName>
</protein>
<feature type="chain" id="PRO_0000456982" description="Peroxisome assembly protein 26">
    <location>
        <begin position="1"/>
        <end position="301"/>
    </location>
</feature>
<feature type="topological domain" description="Cytoplasmic" evidence="1">
    <location>
        <begin position="1"/>
        <end position="246"/>
    </location>
</feature>
<feature type="transmembrane region" description="Helical; Signal-anchor for type II membrane protein" evidence="2">
    <location>
        <begin position="247"/>
        <end position="263"/>
    </location>
</feature>
<feature type="topological domain" description="Peroxisomal" evidence="1">
    <location>
        <begin position="264"/>
        <end position="301"/>
    </location>
</feature>
<evidence type="ECO:0000250" key="1">
    <source>
        <dbReference type="UniProtKB" id="Q7Z412"/>
    </source>
</evidence>
<evidence type="ECO:0000255" key="2"/>
<evidence type="ECO:0000269" key="3">
    <source>
    </source>
</evidence>
<evidence type="ECO:0000269" key="4">
    <source>
    </source>
</evidence>
<evidence type="ECO:0000305" key="5"/>
<comment type="function">
    <text evidence="1 3 4">Peroxisomal docking factor that anchors PEX1 and PEX6 to peroxisome membranes (PubMed:16854980, PubMed:21362118). It is therefore required for the formation of the PEX1-PEX6 AAA ATPase complex, a complex that mediates the extraction of the PEX5 receptor from peroxisomal membrane (By similarity).</text>
</comment>
<comment type="subunit">
    <text evidence="1">Interacts directly with PEX6 via its cytoplasmic domain. Interacts indirectly with PEX1, via its interaction with PEX6.</text>
</comment>
<comment type="subcellular location">
    <subcellularLocation>
        <location evidence="1">Peroxisome membrane</location>
        <topology evidence="1">Single-pass type II membrane protein</topology>
    </subcellularLocation>
</comment>
<comment type="similarity">
    <text evidence="5">Belongs to the peroxin-26 family.</text>
</comment>